<evidence type="ECO:0000250" key="1">
    <source>
        <dbReference type="UniProtKB" id="Q7L592"/>
    </source>
</evidence>
<evidence type="ECO:0000269" key="2">
    <source>
    </source>
</evidence>
<evidence type="ECO:0000269" key="3">
    <source>
    </source>
</evidence>
<evidence type="ECO:0000305" key="4"/>
<reference key="1">
    <citation type="journal article" date="1994" name="Yeast">
        <title>DNA sequencing of a 36.2 kb fragment located between the FAS1 and LAP loci of chromosome XI of Saccharomyces cerevisiae.</title>
        <authorList>
            <person name="Vandenbol M."/>
            <person name="Bolle P.-A."/>
            <person name="Dion C."/>
            <person name="Portetelle D."/>
            <person name="Hilger F."/>
        </authorList>
    </citation>
    <scope>NUCLEOTIDE SEQUENCE [GENOMIC DNA]</scope>
    <source>
        <strain>ATCC 204508 / S288c</strain>
    </source>
</reference>
<reference key="2">
    <citation type="journal article" date="1994" name="Nature">
        <title>Complete DNA sequence of yeast chromosome XI.</title>
        <authorList>
            <person name="Dujon B."/>
            <person name="Alexandraki D."/>
            <person name="Andre B."/>
            <person name="Ansorge W."/>
            <person name="Baladron V."/>
            <person name="Ballesta J.P.G."/>
            <person name="Banrevi A."/>
            <person name="Bolle P.-A."/>
            <person name="Bolotin-Fukuhara M."/>
            <person name="Bossier P."/>
            <person name="Bou G."/>
            <person name="Boyer J."/>
            <person name="Buitrago M.J."/>
            <person name="Cheret G."/>
            <person name="Colleaux L."/>
            <person name="Daignan-Fornier B."/>
            <person name="del Rey F."/>
            <person name="Dion C."/>
            <person name="Domdey H."/>
            <person name="Duesterhoeft A."/>
            <person name="Duesterhus S."/>
            <person name="Entian K.-D."/>
            <person name="Erfle H."/>
            <person name="Esteban P.F."/>
            <person name="Feldmann H."/>
            <person name="Fernandes L."/>
            <person name="Fobo G.M."/>
            <person name="Fritz C."/>
            <person name="Fukuhara H."/>
            <person name="Gabel C."/>
            <person name="Gaillon L."/>
            <person name="Garcia-Cantalejo J.M."/>
            <person name="Garcia-Ramirez J.J."/>
            <person name="Gent M.E."/>
            <person name="Ghazvini M."/>
            <person name="Goffeau A."/>
            <person name="Gonzalez A."/>
            <person name="Grothues D."/>
            <person name="Guerreiro P."/>
            <person name="Hegemann J.H."/>
            <person name="Hewitt N."/>
            <person name="Hilger F."/>
            <person name="Hollenberg C.P."/>
            <person name="Horaitis O."/>
            <person name="Indge K.J."/>
            <person name="Jacquier A."/>
            <person name="James C.M."/>
            <person name="Jauniaux J.-C."/>
            <person name="Jimenez A."/>
            <person name="Keuchel H."/>
            <person name="Kirchrath L."/>
            <person name="Kleine K."/>
            <person name="Koetter P."/>
            <person name="Legrain P."/>
            <person name="Liebl S."/>
            <person name="Louis E.J."/>
            <person name="Maia e Silva A."/>
            <person name="Marck C."/>
            <person name="Monnier A.-L."/>
            <person name="Moestl D."/>
            <person name="Mueller S."/>
            <person name="Obermaier B."/>
            <person name="Oliver S.G."/>
            <person name="Pallier C."/>
            <person name="Pascolo S."/>
            <person name="Pfeiffer F."/>
            <person name="Philippsen P."/>
            <person name="Planta R.J."/>
            <person name="Pohl F.M."/>
            <person name="Pohl T.M."/>
            <person name="Poehlmann R."/>
            <person name="Portetelle D."/>
            <person name="Purnelle B."/>
            <person name="Puzos V."/>
            <person name="Ramezani Rad M."/>
            <person name="Rasmussen S.W."/>
            <person name="Remacha M.A."/>
            <person name="Revuelta J.L."/>
            <person name="Richard G.-F."/>
            <person name="Rieger M."/>
            <person name="Rodrigues-Pousada C."/>
            <person name="Rose M."/>
            <person name="Rupp T."/>
            <person name="Santos M.A."/>
            <person name="Schwager C."/>
            <person name="Sensen C."/>
            <person name="Skala J."/>
            <person name="Soares H."/>
            <person name="Sor F."/>
            <person name="Stegemann J."/>
            <person name="Tettelin H."/>
            <person name="Thierry A."/>
            <person name="Tzermia M."/>
            <person name="Urrestarazu L.A."/>
            <person name="van Dyck L."/>
            <person name="van Vliet-Reedijk J.C."/>
            <person name="Valens M."/>
            <person name="Vandenbol M."/>
            <person name="Vilela C."/>
            <person name="Vissers S."/>
            <person name="von Wettstein D."/>
            <person name="Voss H."/>
            <person name="Wiemann S."/>
            <person name="Xu G."/>
            <person name="Zimmermann J."/>
            <person name="Haasemann M."/>
            <person name="Becker I."/>
            <person name="Mewes H.-W."/>
        </authorList>
    </citation>
    <scope>NUCLEOTIDE SEQUENCE [LARGE SCALE GENOMIC DNA]</scope>
    <source>
        <strain>ATCC 204508 / S288c</strain>
    </source>
</reference>
<reference key="3">
    <citation type="journal article" date="2014" name="G3 (Bethesda)">
        <title>The reference genome sequence of Saccharomyces cerevisiae: Then and now.</title>
        <authorList>
            <person name="Engel S.R."/>
            <person name="Dietrich F.S."/>
            <person name="Fisk D.G."/>
            <person name="Binkley G."/>
            <person name="Balakrishnan R."/>
            <person name="Costanzo M.C."/>
            <person name="Dwight S.S."/>
            <person name="Hitz B.C."/>
            <person name="Karra K."/>
            <person name="Nash R.S."/>
            <person name="Weng S."/>
            <person name="Wong E.D."/>
            <person name="Lloyd P."/>
            <person name="Skrzypek M.S."/>
            <person name="Miyasato S.R."/>
            <person name="Simison M."/>
            <person name="Cherry J.M."/>
        </authorList>
    </citation>
    <scope>GENOME REANNOTATION</scope>
    <source>
        <strain>ATCC 204508 / S288c</strain>
    </source>
</reference>
<reference key="4">
    <citation type="journal article" date="2007" name="Genome Res.">
        <title>Approaching a complete repository of sequence-verified protein-encoding clones for Saccharomyces cerevisiae.</title>
        <authorList>
            <person name="Hu Y."/>
            <person name="Rolfs A."/>
            <person name="Bhullar B."/>
            <person name="Murthy T.V.S."/>
            <person name="Zhu C."/>
            <person name="Berger M.F."/>
            <person name="Camargo A.A."/>
            <person name="Kelley F."/>
            <person name="McCarron S."/>
            <person name="Jepson D."/>
            <person name="Richardson A."/>
            <person name="Raphael J."/>
            <person name="Moreira D."/>
            <person name="Taycher E."/>
            <person name="Zuo D."/>
            <person name="Mohr S."/>
            <person name="Kane M.F."/>
            <person name="Williamson J."/>
            <person name="Simpson A.J.G."/>
            <person name="Bulyk M.L."/>
            <person name="Harlow E."/>
            <person name="Marsischky G."/>
            <person name="Kolodner R.D."/>
            <person name="LaBaer J."/>
        </authorList>
    </citation>
    <scope>NUCLEOTIDE SEQUENCE [GENOMIC DNA]</scope>
    <source>
        <strain>ATCC 204508 / S288c</strain>
    </source>
</reference>
<reference key="5">
    <citation type="journal article" date="2003" name="Nature">
        <title>Global analysis of protein localization in budding yeast.</title>
        <authorList>
            <person name="Huh W.-K."/>
            <person name="Falvo J.V."/>
            <person name="Gerke L.C."/>
            <person name="Carroll A.S."/>
            <person name="Howson R.W."/>
            <person name="Weissman J.S."/>
            <person name="O'Shea E.K."/>
        </authorList>
    </citation>
    <scope>SUBCELLULAR LOCATION [LARGE SCALE ANALYSIS]</scope>
</reference>
<reference key="6">
    <citation type="journal article" date="2003" name="Nature">
        <title>Global analysis of protein expression in yeast.</title>
        <authorList>
            <person name="Ghaemmaghami S."/>
            <person name="Huh W.-K."/>
            <person name="Bower K."/>
            <person name="Howson R.W."/>
            <person name="Belle A."/>
            <person name="Dephoure N."/>
            <person name="O'Shea E.K."/>
            <person name="Weissman J.S."/>
        </authorList>
    </citation>
    <scope>LEVEL OF PROTEIN EXPRESSION [LARGE SCALE ANALYSIS]</scope>
</reference>
<comment type="function">
    <text evidence="1">Arginine methyltransferase involved in the assembly or stability of mitochondrial NADH:ubiquinone oxidoreductase complex (complex I).</text>
</comment>
<comment type="catalytic activity">
    <reaction evidence="1">
        <text>L-arginyl-[protein] + 2 S-adenosyl-L-methionine = N(omega),N(omega)'-dimethyl-L-arginyl-[protein] + 2 S-adenosyl-L-homocysteine + 2 H(+)</text>
        <dbReference type="Rhea" id="RHEA:48108"/>
        <dbReference type="Rhea" id="RHEA-COMP:10532"/>
        <dbReference type="Rhea" id="RHEA-COMP:11992"/>
        <dbReference type="ChEBI" id="CHEBI:15378"/>
        <dbReference type="ChEBI" id="CHEBI:29965"/>
        <dbReference type="ChEBI" id="CHEBI:57856"/>
        <dbReference type="ChEBI" id="CHEBI:59789"/>
        <dbReference type="ChEBI" id="CHEBI:88221"/>
        <dbReference type="EC" id="2.1.1.320"/>
    </reaction>
</comment>
<comment type="subcellular location">
    <subcellularLocation>
        <location evidence="2">Mitochondrion</location>
    </subcellularLocation>
</comment>
<comment type="miscellaneous">
    <text evidence="3">Present with 1100 molecules/cell in log phase SD medium.</text>
</comment>
<comment type="similarity">
    <text evidence="4">Belongs to the NDUFAF7 family.</text>
</comment>
<feature type="chain" id="PRO_0000203142" description="Protein arginine methyltransferase NDUFAF7 homolog, mitochondrial">
    <location>
        <begin position="1"/>
        <end position="402"/>
    </location>
</feature>
<protein>
    <recommendedName>
        <fullName evidence="1">Protein arginine methyltransferase NDUFAF7 homolog, mitochondrial</fullName>
        <ecNumber evidence="1">2.1.1.320</ecNumber>
    </recommendedName>
    <alternativeName>
        <fullName>NADH dehydrogenase [ubiquinone] complex I, assembly factor 7 homolog</fullName>
    </alternativeName>
    <alternativeName>
        <fullName>Protein midA homolog</fullName>
    </alternativeName>
</protein>
<accession>P36052</accession>
<accession>D6VX37</accession>
<gene>
    <name type="ordered locus">YKL162C</name>
    <name type="ORF">YKL616</name>
</gene>
<sequence length="402" mass="46509">MMKRLHPLRIQVHLKSDYPLFTFEQLLSTNGIRRGQTARISLKDYIEWQNFPNIMKRENFFTQRKPVTTTAKEEPFSFDNILDCEPQFSKCLAKWLLVNYKLNDYPYYDLNIVNIYTDLPQAIQICKNLMSYLKSTLSDNMFQKIKYFMVPLYKCDKIPSKLLDGIPGSVSLVQDYPVSPYFLQKKFHIEDPIQILMLNDVIKYTTHDLVRYSSDDKGWQQCFVDINKNGQKSKSFDSAIDYSCELALEQMFNDRSHVSPGKELYIPTKLIEILMTIKNNIPEHRLFIVDTPQRSSPTIISLLKSLISPRPTGSSQIVQPYSDSIFSDKRSGRICFMTDFLQLQNIYNGINSSSSSCEVEDVADFVEKWISPSERSTLSSQNGNRPQLEDIKNSSLAVLHST</sequence>
<dbReference type="EC" id="2.1.1.320" evidence="1"/>
<dbReference type="EMBL" id="Z26877">
    <property type="protein sequence ID" value="CAA81492.1"/>
    <property type="molecule type" value="Genomic_DNA"/>
</dbReference>
<dbReference type="EMBL" id="Z28162">
    <property type="protein sequence ID" value="CAA82004.1"/>
    <property type="molecule type" value="Genomic_DNA"/>
</dbReference>
<dbReference type="EMBL" id="AY692700">
    <property type="protein sequence ID" value="AAT92719.1"/>
    <property type="molecule type" value="Genomic_DNA"/>
</dbReference>
<dbReference type="EMBL" id="BK006944">
    <property type="protein sequence ID" value="DAA09003.1"/>
    <property type="molecule type" value="Genomic_DNA"/>
</dbReference>
<dbReference type="PIR" id="S37789">
    <property type="entry name" value="S37789"/>
</dbReference>
<dbReference type="RefSeq" id="NP_012760.1">
    <property type="nucleotide sequence ID" value="NM_001179728.1"/>
</dbReference>
<dbReference type="BioGRID" id="33976">
    <property type="interactions" value="45"/>
</dbReference>
<dbReference type="FunCoup" id="P36052">
    <property type="interactions" value="48"/>
</dbReference>
<dbReference type="IntAct" id="P36052">
    <property type="interactions" value="1"/>
</dbReference>
<dbReference type="STRING" id="4932.YKL162C"/>
<dbReference type="iPTMnet" id="P36052"/>
<dbReference type="PaxDb" id="4932-YKL162C"/>
<dbReference type="PeptideAtlas" id="P36052"/>
<dbReference type="EnsemblFungi" id="YKL162C_mRNA">
    <property type="protein sequence ID" value="YKL162C"/>
    <property type="gene ID" value="YKL162C"/>
</dbReference>
<dbReference type="GeneID" id="853695"/>
<dbReference type="KEGG" id="sce:YKL162C"/>
<dbReference type="AGR" id="SGD:S000001645"/>
<dbReference type="SGD" id="S000001645">
    <property type="gene designation" value="YKL162C"/>
</dbReference>
<dbReference type="VEuPathDB" id="FungiDB:YKL162C"/>
<dbReference type="eggNOG" id="ENOG502RR6Q">
    <property type="taxonomic scope" value="Eukaryota"/>
</dbReference>
<dbReference type="HOGENOM" id="CLU_056775_0_0_1"/>
<dbReference type="InParanoid" id="P36052"/>
<dbReference type="OMA" id="DYSCELA"/>
<dbReference type="OrthoDB" id="17415at2759"/>
<dbReference type="BioCyc" id="YEAST:G3O-31930-MONOMER"/>
<dbReference type="BioGRID-ORCS" id="853695">
    <property type="hits" value="1 hit in 10 CRISPR screens"/>
</dbReference>
<dbReference type="PRO" id="PR:P36052"/>
<dbReference type="Proteomes" id="UP000002311">
    <property type="component" value="Chromosome XI"/>
</dbReference>
<dbReference type="RNAct" id="P36052">
    <property type="molecule type" value="protein"/>
</dbReference>
<dbReference type="GO" id="GO:0005739">
    <property type="term" value="C:mitochondrion"/>
    <property type="evidence" value="ECO:0007005"/>
    <property type="project" value="SGD"/>
</dbReference>
<dbReference type="GO" id="GO:0035243">
    <property type="term" value="F:protein-arginine omega-N symmetric methyltransferase activity"/>
    <property type="evidence" value="ECO:0000318"/>
    <property type="project" value="GO_Central"/>
</dbReference>
<dbReference type="GO" id="GO:0032259">
    <property type="term" value="P:methylation"/>
    <property type="evidence" value="ECO:0007669"/>
    <property type="project" value="UniProtKB-KW"/>
</dbReference>
<dbReference type="InterPro" id="IPR003788">
    <property type="entry name" value="NDUFAF7"/>
</dbReference>
<dbReference type="PANTHER" id="PTHR12049:SF5">
    <property type="entry name" value="PROTEIN ARGININE METHYLTRANSFERASE NDUFAF7 HOMOLOG, MITOCHONDRIAL"/>
    <property type="match status" value="1"/>
</dbReference>
<dbReference type="PANTHER" id="PTHR12049">
    <property type="entry name" value="PROTEIN ARGININE METHYLTRANSFERASE NDUFAF7, MITOCHONDRIAL"/>
    <property type="match status" value="1"/>
</dbReference>
<dbReference type="Pfam" id="PF02636">
    <property type="entry name" value="Methyltransf_28"/>
    <property type="match status" value="1"/>
</dbReference>
<proteinExistence type="evidence at protein level"/>
<name>NDUF7_YEAST</name>
<keyword id="KW-0489">Methyltransferase</keyword>
<keyword id="KW-0496">Mitochondrion</keyword>
<keyword id="KW-1185">Reference proteome</keyword>
<keyword id="KW-0808">Transferase</keyword>
<organism>
    <name type="scientific">Saccharomyces cerevisiae (strain ATCC 204508 / S288c)</name>
    <name type="common">Baker's yeast</name>
    <dbReference type="NCBI Taxonomy" id="559292"/>
    <lineage>
        <taxon>Eukaryota</taxon>
        <taxon>Fungi</taxon>
        <taxon>Dikarya</taxon>
        <taxon>Ascomycota</taxon>
        <taxon>Saccharomycotina</taxon>
        <taxon>Saccharomycetes</taxon>
        <taxon>Saccharomycetales</taxon>
        <taxon>Saccharomycetaceae</taxon>
        <taxon>Saccharomyces</taxon>
    </lineage>
</organism>